<organism>
    <name type="scientific">Aliivibrio salmonicida (strain LFI1238)</name>
    <name type="common">Vibrio salmonicida (strain LFI1238)</name>
    <dbReference type="NCBI Taxonomy" id="316275"/>
    <lineage>
        <taxon>Bacteria</taxon>
        <taxon>Pseudomonadati</taxon>
        <taxon>Pseudomonadota</taxon>
        <taxon>Gammaproteobacteria</taxon>
        <taxon>Vibrionales</taxon>
        <taxon>Vibrionaceae</taxon>
        <taxon>Aliivibrio</taxon>
    </lineage>
</organism>
<accession>B6EKA9</accession>
<name>SSRP_ALISL</name>
<feature type="chain" id="PRO_1000090133" description="SsrA-binding protein">
    <location>
        <begin position="1"/>
        <end position="161"/>
    </location>
</feature>
<feature type="region of interest" description="Disordered" evidence="2">
    <location>
        <begin position="137"/>
        <end position="161"/>
    </location>
</feature>
<feature type="compositionally biased region" description="Basic and acidic residues" evidence="2">
    <location>
        <begin position="139"/>
        <end position="154"/>
    </location>
</feature>
<protein>
    <recommendedName>
        <fullName evidence="1">SsrA-binding protein</fullName>
    </recommendedName>
    <alternativeName>
        <fullName evidence="1">Small protein B</fullName>
    </alternativeName>
</protein>
<comment type="function">
    <text evidence="1">Required for rescue of stalled ribosomes mediated by trans-translation. Binds to transfer-messenger RNA (tmRNA), required for stable association of tmRNA with ribosomes. tmRNA and SmpB together mimic tRNA shape, replacing the anticodon stem-loop with SmpB. tmRNA is encoded by the ssrA gene; the 2 termini fold to resemble tRNA(Ala) and it encodes a 'tag peptide', a short internal open reading frame. During trans-translation Ala-aminoacylated tmRNA acts like a tRNA, entering the A-site of stalled ribosomes, displacing the stalled mRNA. The ribosome then switches to translate the ORF on the tmRNA; the nascent peptide is terminated with the 'tag peptide' encoded by the tmRNA and targeted for degradation. The ribosome is freed to recommence translation, which seems to be the essential function of trans-translation.</text>
</comment>
<comment type="subcellular location">
    <subcellularLocation>
        <location evidence="1">Cytoplasm</location>
    </subcellularLocation>
    <text evidence="1">The tmRNA-SmpB complex associates with stalled 70S ribosomes.</text>
</comment>
<comment type="similarity">
    <text evidence="1">Belongs to the SmpB family.</text>
</comment>
<proteinExistence type="inferred from homology"/>
<reference key="1">
    <citation type="journal article" date="2008" name="BMC Genomics">
        <title>The genome sequence of the fish pathogen Aliivibrio salmonicida strain LFI1238 shows extensive evidence of gene decay.</title>
        <authorList>
            <person name="Hjerde E."/>
            <person name="Lorentzen M.S."/>
            <person name="Holden M.T."/>
            <person name="Seeger K."/>
            <person name="Paulsen S."/>
            <person name="Bason N."/>
            <person name="Churcher C."/>
            <person name="Harris D."/>
            <person name="Norbertczak H."/>
            <person name="Quail M.A."/>
            <person name="Sanders S."/>
            <person name="Thurston S."/>
            <person name="Parkhill J."/>
            <person name="Willassen N.P."/>
            <person name="Thomson N.R."/>
        </authorList>
    </citation>
    <scope>NUCLEOTIDE SEQUENCE [LARGE SCALE GENOMIC DNA]</scope>
    <source>
        <strain>LFI1238</strain>
    </source>
</reference>
<sequence length="161" mass="18366">MAKKKSKDKAGSNTIAMNKQARHEYFIEDEIEAGVELQGWEVKSLRSGKVNIAESYVYVRDGEIFISGMNITPLQAASTHVVANPTRVRKLLMSRKEIDNLIGRVNREGMTLVATTMYWVRSWAKIKVGVAKGKKLHDKRTDSKEKDWNRDKARIMKSSLR</sequence>
<keyword id="KW-0963">Cytoplasm</keyword>
<keyword id="KW-0694">RNA-binding</keyword>
<gene>
    <name evidence="1" type="primary">smpB</name>
    <name type="ordered locus">VSAL_I2479</name>
</gene>
<evidence type="ECO:0000255" key="1">
    <source>
        <dbReference type="HAMAP-Rule" id="MF_00023"/>
    </source>
</evidence>
<evidence type="ECO:0000256" key="2">
    <source>
        <dbReference type="SAM" id="MobiDB-lite"/>
    </source>
</evidence>
<dbReference type="EMBL" id="FM178379">
    <property type="protein sequence ID" value="CAQ80163.1"/>
    <property type="molecule type" value="Genomic_DNA"/>
</dbReference>
<dbReference type="RefSeq" id="WP_012550958.1">
    <property type="nucleotide sequence ID" value="NC_011312.1"/>
</dbReference>
<dbReference type="SMR" id="B6EKA9"/>
<dbReference type="KEGG" id="vsa:VSAL_I2479"/>
<dbReference type="eggNOG" id="COG0691">
    <property type="taxonomic scope" value="Bacteria"/>
</dbReference>
<dbReference type="HOGENOM" id="CLU_108953_3_0_6"/>
<dbReference type="Proteomes" id="UP000001730">
    <property type="component" value="Chromosome 1"/>
</dbReference>
<dbReference type="GO" id="GO:0005829">
    <property type="term" value="C:cytosol"/>
    <property type="evidence" value="ECO:0007669"/>
    <property type="project" value="TreeGrafter"/>
</dbReference>
<dbReference type="GO" id="GO:0003723">
    <property type="term" value="F:RNA binding"/>
    <property type="evidence" value="ECO:0007669"/>
    <property type="project" value="UniProtKB-UniRule"/>
</dbReference>
<dbReference type="GO" id="GO:0070929">
    <property type="term" value="P:trans-translation"/>
    <property type="evidence" value="ECO:0007669"/>
    <property type="project" value="UniProtKB-UniRule"/>
</dbReference>
<dbReference type="CDD" id="cd09294">
    <property type="entry name" value="SmpB"/>
    <property type="match status" value="1"/>
</dbReference>
<dbReference type="Gene3D" id="2.40.280.10">
    <property type="match status" value="1"/>
</dbReference>
<dbReference type="HAMAP" id="MF_00023">
    <property type="entry name" value="SmpB"/>
    <property type="match status" value="1"/>
</dbReference>
<dbReference type="InterPro" id="IPR023620">
    <property type="entry name" value="SmpB"/>
</dbReference>
<dbReference type="InterPro" id="IPR000037">
    <property type="entry name" value="SsrA-bd_prot"/>
</dbReference>
<dbReference type="InterPro" id="IPR020081">
    <property type="entry name" value="SsrA-bd_prot_CS"/>
</dbReference>
<dbReference type="NCBIfam" id="NF003843">
    <property type="entry name" value="PRK05422.1"/>
    <property type="match status" value="1"/>
</dbReference>
<dbReference type="NCBIfam" id="TIGR00086">
    <property type="entry name" value="smpB"/>
    <property type="match status" value="1"/>
</dbReference>
<dbReference type="PANTHER" id="PTHR30308:SF2">
    <property type="entry name" value="SSRA-BINDING PROTEIN"/>
    <property type="match status" value="1"/>
</dbReference>
<dbReference type="PANTHER" id="PTHR30308">
    <property type="entry name" value="TMRNA-BINDING COMPONENT OF TRANS-TRANSLATION TAGGING COMPLEX"/>
    <property type="match status" value="1"/>
</dbReference>
<dbReference type="Pfam" id="PF01668">
    <property type="entry name" value="SmpB"/>
    <property type="match status" value="1"/>
</dbReference>
<dbReference type="SUPFAM" id="SSF74982">
    <property type="entry name" value="Small protein B (SmpB)"/>
    <property type="match status" value="1"/>
</dbReference>
<dbReference type="PROSITE" id="PS01317">
    <property type="entry name" value="SSRP"/>
    <property type="match status" value="1"/>
</dbReference>